<evidence type="ECO:0000255" key="1">
    <source>
        <dbReference type="HAMAP-Rule" id="MF_00500"/>
    </source>
</evidence>
<evidence type="ECO:0000256" key="2">
    <source>
        <dbReference type="SAM" id="MobiDB-lite"/>
    </source>
</evidence>
<evidence type="ECO:0000305" key="3"/>
<protein>
    <recommendedName>
        <fullName evidence="1">Small ribosomal subunit protein bS20</fullName>
    </recommendedName>
    <alternativeName>
        <fullName evidence="3">30S ribosomal protein S20</fullName>
    </alternativeName>
</protein>
<feature type="chain" id="PRO_0000224978" description="Small ribosomal subunit protein bS20">
    <location>
        <begin position="1"/>
        <end position="86"/>
    </location>
</feature>
<feature type="region of interest" description="Disordered" evidence="2">
    <location>
        <begin position="1"/>
        <end position="26"/>
    </location>
</feature>
<feature type="compositionally biased region" description="Basic residues" evidence="2">
    <location>
        <begin position="1"/>
        <end position="11"/>
    </location>
</feature>
<sequence>MANIKSAKKRAITSEKNRQHNASRRSMMRTYFKKVIVAIEAGDKEAAQQAFSVATPILDRYATKGLIHKNKAARHKSRIAAKIKAL</sequence>
<gene>
    <name evidence="1" type="primary">rpsT</name>
    <name type="ordered locus">PSHAa0914</name>
</gene>
<proteinExistence type="inferred from homology"/>
<accession>Q3IEA5</accession>
<reference key="1">
    <citation type="journal article" date="2005" name="Genome Res.">
        <title>Coping with cold: the genome of the versatile marine Antarctica bacterium Pseudoalteromonas haloplanktis TAC125.</title>
        <authorList>
            <person name="Medigue C."/>
            <person name="Krin E."/>
            <person name="Pascal G."/>
            <person name="Barbe V."/>
            <person name="Bernsel A."/>
            <person name="Bertin P.N."/>
            <person name="Cheung F."/>
            <person name="Cruveiller S."/>
            <person name="D'Amico S."/>
            <person name="Duilio A."/>
            <person name="Fang G."/>
            <person name="Feller G."/>
            <person name="Ho C."/>
            <person name="Mangenot S."/>
            <person name="Marino G."/>
            <person name="Nilsson J."/>
            <person name="Parrilli E."/>
            <person name="Rocha E.P.C."/>
            <person name="Rouy Z."/>
            <person name="Sekowska A."/>
            <person name="Tutino M.L."/>
            <person name="Vallenet D."/>
            <person name="von Heijne G."/>
            <person name="Danchin A."/>
        </authorList>
    </citation>
    <scope>NUCLEOTIDE SEQUENCE [LARGE SCALE GENOMIC DNA]</scope>
    <source>
        <strain>TAC 125</strain>
    </source>
</reference>
<name>RS20_PSET1</name>
<keyword id="KW-1185">Reference proteome</keyword>
<keyword id="KW-0687">Ribonucleoprotein</keyword>
<keyword id="KW-0689">Ribosomal protein</keyword>
<keyword id="KW-0694">RNA-binding</keyword>
<keyword id="KW-0699">rRNA-binding</keyword>
<comment type="function">
    <text evidence="1">Binds directly to 16S ribosomal RNA.</text>
</comment>
<comment type="similarity">
    <text evidence="1">Belongs to the bacterial ribosomal protein bS20 family.</text>
</comment>
<dbReference type="EMBL" id="CR954246">
    <property type="protein sequence ID" value="CAI85994.1"/>
    <property type="molecule type" value="Genomic_DNA"/>
</dbReference>
<dbReference type="SMR" id="Q3IEA5"/>
<dbReference type="STRING" id="326442.PSHAa0914"/>
<dbReference type="KEGG" id="pha:PSHAa0914"/>
<dbReference type="eggNOG" id="COG0268">
    <property type="taxonomic scope" value="Bacteria"/>
</dbReference>
<dbReference type="HOGENOM" id="CLU_160655_4_0_6"/>
<dbReference type="BioCyc" id="PHAL326442:PSHA_RS04465-MONOMER"/>
<dbReference type="Proteomes" id="UP000006843">
    <property type="component" value="Chromosome I"/>
</dbReference>
<dbReference type="GO" id="GO:0005829">
    <property type="term" value="C:cytosol"/>
    <property type="evidence" value="ECO:0007669"/>
    <property type="project" value="TreeGrafter"/>
</dbReference>
<dbReference type="GO" id="GO:0015935">
    <property type="term" value="C:small ribosomal subunit"/>
    <property type="evidence" value="ECO:0007669"/>
    <property type="project" value="TreeGrafter"/>
</dbReference>
<dbReference type="GO" id="GO:0070181">
    <property type="term" value="F:small ribosomal subunit rRNA binding"/>
    <property type="evidence" value="ECO:0007669"/>
    <property type="project" value="TreeGrafter"/>
</dbReference>
<dbReference type="GO" id="GO:0003735">
    <property type="term" value="F:structural constituent of ribosome"/>
    <property type="evidence" value="ECO:0007669"/>
    <property type="project" value="InterPro"/>
</dbReference>
<dbReference type="GO" id="GO:0006412">
    <property type="term" value="P:translation"/>
    <property type="evidence" value="ECO:0007669"/>
    <property type="project" value="UniProtKB-UniRule"/>
</dbReference>
<dbReference type="FunFam" id="1.20.58.110:FF:000001">
    <property type="entry name" value="30S ribosomal protein S20"/>
    <property type="match status" value="1"/>
</dbReference>
<dbReference type="Gene3D" id="1.20.58.110">
    <property type="entry name" value="Ribosomal protein S20"/>
    <property type="match status" value="1"/>
</dbReference>
<dbReference type="HAMAP" id="MF_00500">
    <property type="entry name" value="Ribosomal_bS20"/>
    <property type="match status" value="1"/>
</dbReference>
<dbReference type="InterPro" id="IPR002583">
    <property type="entry name" value="Ribosomal_bS20"/>
</dbReference>
<dbReference type="InterPro" id="IPR036510">
    <property type="entry name" value="Ribosomal_bS20_sf"/>
</dbReference>
<dbReference type="NCBIfam" id="TIGR00029">
    <property type="entry name" value="S20"/>
    <property type="match status" value="1"/>
</dbReference>
<dbReference type="PANTHER" id="PTHR33398">
    <property type="entry name" value="30S RIBOSOMAL PROTEIN S20"/>
    <property type="match status" value="1"/>
</dbReference>
<dbReference type="PANTHER" id="PTHR33398:SF1">
    <property type="entry name" value="SMALL RIBOSOMAL SUBUNIT PROTEIN BS20C"/>
    <property type="match status" value="1"/>
</dbReference>
<dbReference type="Pfam" id="PF01649">
    <property type="entry name" value="Ribosomal_S20p"/>
    <property type="match status" value="1"/>
</dbReference>
<dbReference type="SUPFAM" id="SSF46992">
    <property type="entry name" value="Ribosomal protein S20"/>
    <property type="match status" value="1"/>
</dbReference>
<organism>
    <name type="scientific">Pseudoalteromonas translucida (strain TAC 125)</name>
    <dbReference type="NCBI Taxonomy" id="326442"/>
    <lineage>
        <taxon>Bacteria</taxon>
        <taxon>Pseudomonadati</taxon>
        <taxon>Pseudomonadota</taxon>
        <taxon>Gammaproteobacteria</taxon>
        <taxon>Alteromonadales</taxon>
        <taxon>Pseudoalteromonadaceae</taxon>
        <taxon>Pseudoalteromonas</taxon>
    </lineage>
</organism>